<protein>
    <recommendedName>
        <fullName evidence="1">3-phosphoshikimate 1-carboxyvinyltransferase</fullName>
        <ecNumber evidence="1">2.5.1.19</ecNumber>
    </recommendedName>
    <alternativeName>
        <fullName evidence="1">5-enolpyruvylshikimate-3-phosphate synthase</fullName>
        <shortName evidence="1">EPSP synthase</shortName>
        <shortName evidence="1">EPSPS</shortName>
    </alternativeName>
</protein>
<sequence length="427" mass="46210">MESLTLQPIARVDGAINLPGSKSVSNRALLLAALACGKTVLTNLLDSDDVRHMLNALSALGINYTLSADRTRCDITGNGGPLRASGALELFLGNAGTAMRPLAAALCLGQNEIVLTGEPRMKERPIGHLVDSLRQGGANIDYQEQENYPPLRLRGGFTGGDIEVDGSVSSQFLTALLMTAPLAPEDTTIRVKGELVSKPYIDITLNLMKTFGVEITNHHYQQFVVKGGQQYHSPGRYLVEGDASSASYFLAAGAIKGGTVKVTGIGRKSMQGDIRFADVLEKMGATITWGDDFIACTRGELHAIDMDMNHIPDAAMTIATTALFAKGTTTLRNIYNWRVKETDRLFAMATELRKVGAEVEEGHDYIRITPPAKLQHADIGTYNDHRMAMCFSLVALSDTPVTILDPKCTAKTFPDYFEQLARMSTPA</sequence>
<feature type="chain" id="PRO_1000099748" description="3-phosphoshikimate 1-carboxyvinyltransferase">
    <location>
        <begin position="1"/>
        <end position="427"/>
    </location>
</feature>
<feature type="active site" description="Proton acceptor" evidence="1">
    <location>
        <position position="313"/>
    </location>
</feature>
<feature type="binding site" evidence="1">
    <location>
        <position position="22"/>
    </location>
    <ligand>
        <name>3-phosphoshikimate</name>
        <dbReference type="ChEBI" id="CHEBI:145989"/>
    </ligand>
</feature>
<feature type="binding site" evidence="1">
    <location>
        <position position="22"/>
    </location>
    <ligand>
        <name>phosphoenolpyruvate</name>
        <dbReference type="ChEBI" id="CHEBI:58702"/>
    </ligand>
</feature>
<feature type="binding site" evidence="1">
    <location>
        <position position="23"/>
    </location>
    <ligand>
        <name>3-phosphoshikimate</name>
        <dbReference type="ChEBI" id="CHEBI:145989"/>
    </ligand>
</feature>
<feature type="binding site" evidence="1">
    <location>
        <position position="27"/>
    </location>
    <ligand>
        <name>3-phosphoshikimate</name>
        <dbReference type="ChEBI" id="CHEBI:145989"/>
    </ligand>
</feature>
<feature type="binding site" evidence="1">
    <location>
        <position position="96"/>
    </location>
    <ligand>
        <name>phosphoenolpyruvate</name>
        <dbReference type="ChEBI" id="CHEBI:58702"/>
    </ligand>
</feature>
<feature type="binding site" evidence="1">
    <location>
        <position position="124"/>
    </location>
    <ligand>
        <name>phosphoenolpyruvate</name>
        <dbReference type="ChEBI" id="CHEBI:58702"/>
    </ligand>
</feature>
<feature type="binding site" evidence="1">
    <location>
        <position position="169"/>
    </location>
    <ligand>
        <name>3-phosphoshikimate</name>
        <dbReference type="ChEBI" id="CHEBI:145989"/>
    </ligand>
</feature>
<feature type="binding site" evidence="1">
    <location>
        <position position="170"/>
    </location>
    <ligand>
        <name>3-phosphoshikimate</name>
        <dbReference type="ChEBI" id="CHEBI:145989"/>
    </ligand>
</feature>
<feature type="binding site" evidence="1">
    <location>
        <position position="171"/>
    </location>
    <ligand>
        <name>3-phosphoshikimate</name>
        <dbReference type="ChEBI" id="CHEBI:145989"/>
    </ligand>
</feature>
<feature type="binding site" evidence="1">
    <location>
        <position position="171"/>
    </location>
    <ligand>
        <name>phosphoenolpyruvate</name>
        <dbReference type="ChEBI" id="CHEBI:58702"/>
    </ligand>
</feature>
<feature type="binding site" evidence="1">
    <location>
        <position position="197"/>
    </location>
    <ligand>
        <name>3-phosphoshikimate</name>
        <dbReference type="ChEBI" id="CHEBI:145989"/>
    </ligand>
</feature>
<feature type="binding site" evidence="1">
    <location>
        <position position="313"/>
    </location>
    <ligand>
        <name>3-phosphoshikimate</name>
        <dbReference type="ChEBI" id="CHEBI:145989"/>
    </ligand>
</feature>
<feature type="binding site" evidence="1">
    <location>
        <position position="336"/>
    </location>
    <ligand>
        <name>3-phosphoshikimate</name>
        <dbReference type="ChEBI" id="CHEBI:145989"/>
    </ligand>
</feature>
<feature type="binding site" evidence="1">
    <location>
        <position position="340"/>
    </location>
    <ligand>
        <name>3-phosphoshikimate</name>
        <dbReference type="ChEBI" id="CHEBI:145989"/>
    </ligand>
</feature>
<feature type="binding site" evidence="1">
    <location>
        <position position="344"/>
    </location>
    <ligand>
        <name>phosphoenolpyruvate</name>
        <dbReference type="ChEBI" id="CHEBI:58702"/>
    </ligand>
</feature>
<feature type="binding site" evidence="1">
    <location>
        <position position="386"/>
    </location>
    <ligand>
        <name>phosphoenolpyruvate</name>
        <dbReference type="ChEBI" id="CHEBI:58702"/>
    </ligand>
</feature>
<feature type="binding site" evidence="1">
    <location>
        <position position="411"/>
    </location>
    <ligand>
        <name>phosphoenolpyruvate</name>
        <dbReference type="ChEBI" id="CHEBI:58702"/>
    </ligand>
</feature>
<dbReference type="EC" id="2.5.1.19" evidence="1"/>
<dbReference type="EMBL" id="CP001120">
    <property type="protein sequence ID" value="ACF67954.1"/>
    <property type="molecule type" value="Genomic_DNA"/>
</dbReference>
<dbReference type="RefSeq" id="WP_000445204.1">
    <property type="nucleotide sequence ID" value="NC_011083.1"/>
</dbReference>
<dbReference type="SMR" id="B4TD38"/>
<dbReference type="KEGG" id="seh:SeHA_C1076"/>
<dbReference type="HOGENOM" id="CLU_024321_0_0_6"/>
<dbReference type="UniPathway" id="UPA00053">
    <property type="reaction ID" value="UER00089"/>
</dbReference>
<dbReference type="Proteomes" id="UP000001866">
    <property type="component" value="Chromosome"/>
</dbReference>
<dbReference type="GO" id="GO:0005737">
    <property type="term" value="C:cytoplasm"/>
    <property type="evidence" value="ECO:0007669"/>
    <property type="project" value="UniProtKB-SubCell"/>
</dbReference>
<dbReference type="GO" id="GO:0003866">
    <property type="term" value="F:3-phosphoshikimate 1-carboxyvinyltransferase activity"/>
    <property type="evidence" value="ECO:0007669"/>
    <property type="project" value="UniProtKB-UniRule"/>
</dbReference>
<dbReference type="GO" id="GO:0008652">
    <property type="term" value="P:amino acid biosynthetic process"/>
    <property type="evidence" value="ECO:0007669"/>
    <property type="project" value="UniProtKB-KW"/>
</dbReference>
<dbReference type="GO" id="GO:0009073">
    <property type="term" value="P:aromatic amino acid family biosynthetic process"/>
    <property type="evidence" value="ECO:0007669"/>
    <property type="project" value="UniProtKB-KW"/>
</dbReference>
<dbReference type="GO" id="GO:0009423">
    <property type="term" value="P:chorismate biosynthetic process"/>
    <property type="evidence" value="ECO:0007669"/>
    <property type="project" value="UniProtKB-UniRule"/>
</dbReference>
<dbReference type="FunFam" id="3.65.10.10:FF:000003">
    <property type="entry name" value="3-phosphoshikimate 1-carboxyvinyltransferase"/>
    <property type="match status" value="1"/>
</dbReference>
<dbReference type="FunFam" id="3.65.10.10:FF:000004">
    <property type="entry name" value="3-phosphoshikimate 1-carboxyvinyltransferase"/>
    <property type="match status" value="1"/>
</dbReference>
<dbReference type="Gene3D" id="3.65.10.10">
    <property type="entry name" value="Enolpyruvate transferase domain"/>
    <property type="match status" value="2"/>
</dbReference>
<dbReference type="HAMAP" id="MF_00210">
    <property type="entry name" value="EPSP_synth"/>
    <property type="match status" value="1"/>
</dbReference>
<dbReference type="InterPro" id="IPR001986">
    <property type="entry name" value="Enolpyruvate_Tfrase_dom"/>
</dbReference>
<dbReference type="InterPro" id="IPR036968">
    <property type="entry name" value="Enolpyruvate_Tfrase_sf"/>
</dbReference>
<dbReference type="InterPro" id="IPR006264">
    <property type="entry name" value="EPSP_synthase"/>
</dbReference>
<dbReference type="InterPro" id="IPR023193">
    <property type="entry name" value="EPSP_synthase_CS"/>
</dbReference>
<dbReference type="InterPro" id="IPR013792">
    <property type="entry name" value="RNA3'P_cycl/enolpyr_Trfase_a/b"/>
</dbReference>
<dbReference type="NCBIfam" id="TIGR01356">
    <property type="entry name" value="aroA"/>
    <property type="match status" value="1"/>
</dbReference>
<dbReference type="PANTHER" id="PTHR21090">
    <property type="entry name" value="AROM/DEHYDROQUINATE SYNTHASE"/>
    <property type="match status" value="1"/>
</dbReference>
<dbReference type="PANTHER" id="PTHR21090:SF5">
    <property type="entry name" value="PENTAFUNCTIONAL AROM POLYPEPTIDE"/>
    <property type="match status" value="1"/>
</dbReference>
<dbReference type="Pfam" id="PF00275">
    <property type="entry name" value="EPSP_synthase"/>
    <property type="match status" value="1"/>
</dbReference>
<dbReference type="PIRSF" id="PIRSF000505">
    <property type="entry name" value="EPSPS"/>
    <property type="match status" value="1"/>
</dbReference>
<dbReference type="SUPFAM" id="SSF55205">
    <property type="entry name" value="EPT/RTPC-like"/>
    <property type="match status" value="1"/>
</dbReference>
<dbReference type="PROSITE" id="PS00104">
    <property type="entry name" value="EPSP_SYNTHASE_1"/>
    <property type="match status" value="1"/>
</dbReference>
<dbReference type="PROSITE" id="PS00885">
    <property type="entry name" value="EPSP_SYNTHASE_2"/>
    <property type="match status" value="1"/>
</dbReference>
<proteinExistence type="inferred from homology"/>
<comment type="function">
    <text evidence="1">Catalyzes the transfer of the enolpyruvyl moiety of phosphoenolpyruvate (PEP) to the 5-hydroxyl of shikimate-3-phosphate (S3P) to produce enolpyruvyl shikimate-3-phosphate and inorganic phosphate.</text>
</comment>
<comment type="catalytic activity">
    <reaction evidence="1">
        <text>3-phosphoshikimate + phosphoenolpyruvate = 5-O-(1-carboxyvinyl)-3-phosphoshikimate + phosphate</text>
        <dbReference type="Rhea" id="RHEA:21256"/>
        <dbReference type="ChEBI" id="CHEBI:43474"/>
        <dbReference type="ChEBI" id="CHEBI:57701"/>
        <dbReference type="ChEBI" id="CHEBI:58702"/>
        <dbReference type="ChEBI" id="CHEBI:145989"/>
        <dbReference type="EC" id="2.5.1.19"/>
    </reaction>
    <physiologicalReaction direction="left-to-right" evidence="1">
        <dbReference type="Rhea" id="RHEA:21257"/>
    </physiologicalReaction>
</comment>
<comment type="pathway">
    <text evidence="1">Metabolic intermediate biosynthesis; chorismate biosynthesis; chorismate from D-erythrose 4-phosphate and phosphoenolpyruvate: step 6/7.</text>
</comment>
<comment type="subunit">
    <text evidence="1">Monomer.</text>
</comment>
<comment type="subcellular location">
    <subcellularLocation>
        <location evidence="1">Cytoplasm</location>
    </subcellularLocation>
</comment>
<comment type="similarity">
    <text evidence="1">Belongs to the EPSP synthase family.</text>
</comment>
<organism>
    <name type="scientific">Salmonella heidelberg (strain SL476)</name>
    <dbReference type="NCBI Taxonomy" id="454169"/>
    <lineage>
        <taxon>Bacteria</taxon>
        <taxon>Pseudomonadati</taxon>
        <taxon>Pseudomonadota</taxon>
        <taxon>Gammaproteobacteria</taxon>
        <taxon>Enterobacterales</taxon>
        <taxon>Enterobacteriaceae</taxon>
        <taxon>Salmonella</taxon>
    </lineage>
</organism>
<accession>B4TD38</accession>
<reference key="1">
    <citation type="journal article" date="2011" name="J. Bacteriol.">
        <title>Comparative genomics of 28 Salmonella enterica isolates: evidence for CRISPR-mediated adaptive sublineage evolution.</title>
        <authorList>
            <person name="Fricke W.F."/>
            <person name="Mammel M.K."/>
            <person name="McDermott P.F."/>
            <person name="Tartera C."/>
            <person name="White D.G."/>
            <person name="Leclerc J.E."/>
            <person name="Ravel J."/>
            <person name="Cebula T.A."/>
        </authorList>
    </citation>
    <scope>NUCLEOTIDE SEQUENCE [LARGE SCALE GENOMIC DNA]</scope>
    <source>
        <strain>SL476</strain>
    </source>
</reference>
<name>AROA_SALHS</name>
<evidence type="ECO:0000255" key="1">
    <source>
        <dbReference type="HAMAP-Rule" id="MF_00210"/>
    </source>
</evidence>
<keyword id="KW-0028">Amino-acid biosynthesis</keyword>
<keyword id="KW-0057">Aromatic amino acid biosynthesis</keyword>
<keyword id="KW-0963">Cytoplasm</keyword>
<keyword id="KW-0808">Transferase</keyword>
<gene>
    <name evidence="1" type="primary">aroA</name>
    <name type="ordered locus">SeHA_C1076</name>
</gene>